<reference key="1">
    <citation type="submission" date="2004-04" db="EMBL/GenBank/DDBJ databases">
        <title>Molecular cloning and expression of a Magnaporthe grisea induced cDNA encoding a zinc-finger transcription factor.</title>
        <authorList>
            <person name="Meng X.-B."/>
            <person name="Lin R.-M."/>
            <person name="Wang M."/>
            <person name="Zhao W.-S."/>
            <person name="Zhang S.-H."/>
            <person name="Peng Y.-L."/>
        </authorList>
    </citation>
    <scope>NUCLEOTIDE SEQUENCE [MRNA] (ISOFORM 3)</scope>
    <source>
        <strain>cv. Aichi asahi</strain>
    </source>
</reference>
<reference key="2">
    <citation type="journal article" date="2002" name="Nature">
        <title>The genome sequence and structure of rice chromosome 1.</title>
        <authorList>
            <person name="Sasaki T."/>
            <person name="Matsumoto T."/>
            <person name="Yamamoto K."/>
            <person name="Sakata K."/>
            <person name="Baba T."/>
            <person name="Katayose Y."/>
            <person name="Wu J."/>
            <person name="Niimura Y."/>
            <person name="Cheng Z."/>
            <person name="Nagamura Y."/>
            <person name="Antonio B.A."/>
            <person name="Kanamori H."/>
            <person name="Hosokawa S."/>
            <person name="Masukawa M."/>
            <person name="Arikawa K."/>
            <person name="Chiden Y."/>
            <person name="Hayashi M."/>
            <person name="Okamoto M."/>
            <person name="Ando T."/>
            <person name="Aoki H."/>
            <person name="Arita K."/>
            <person name="Hamada M."/>
            <person name="Harada C."/>
            <person name="Hijishita S."/>
            <person name="Honda M."/>
            <person name="Ichikawa Y."/>
            <person name="Idonuma A."/>
            <person name="Iijima M."/>
            <person name="Ikeda M."/>
            <person name="Ikeno M."/>
            <person name="Ito S."/>
            <person name="Ito T."/>
            <person name="Ito Y."/>
            <person name="Ito Y."/>
            <person name="Iwabuchi A."/>
            <person name="Kamiya K."/>
            <person name="Karasawa W."/>
            <person name="Katagiri S."/>
            <person name="Kikuta A."/>
            <person name="Kobayashi N."/>
            <person name="Kono I."/>
            <person name="Machita K."/>
            <person name="Maehara T."/>
            <person name="Mizuno H."/>
            <person name="Mizubayashi T."/>
            <person name="Mukai Y."/>
            <person name="Nagasaki H."/>
            <person name="Nakashima M."/>
            <person name="Nakama Y."/>
            <person name="Nakamichi Y."/>
            <person name="Nakamura M."/>
            <person name="Namiki N."/>
            <person name="Negishi M."/>
            <person name="Ohta I."/>
            <person name="Ono N."/>
            <person name="Saji S."/>
            <person name="Sakai K."/>
            <person name="Shibata M."/>
            <person name="Shimokawa T."/>
            <person name="Shomura A."/>
            <person name="Song J."/>
            <person name="Takazaki Y."/>
            <person name="Terasawa K."/>
            <person name="Tsuji K."/>
            <person name="Waki K."/>
            <person name="Yamagata H."/>
            <person name="Yamane H."/>
            <person name="Yoshiki S."/>
            <person name="Yoshihara R."/>
            <person name="Yukawa K."/>
            <person name="Zhong H."/>
            <person name="Iwama H."/>
            <person name="Endo T."/>
            <person name="Ito H."/>
            <person name="Hahn J.H."/>
            <person name="Kim H.-I."/>
            <person name="Eun M.-Y."/>
            <person name="Yano M."/>
            <person name="Jiang J."/>
            <person name="Gojobori T."/>
        </authorList>
    </citation>
    <scope>NUCLEOTIDE SEQUENCE [LARGE SCALE GENOMIC DNA]</scope>
    <source>
        <strain>cv. Nipponbare</strain>
    </source>
</reference>
<reference key="3">
    <citation type="journal article" date="2005" name="Nature">
        <title>The map-based sequence of the rice genome.</title>
        <authorList>
            <consortium name="International rice genome sequencing project (IRGSP)"/>
        </authorList>
    </citation>
    <scope>NUCLEOTIDE SEQUENCE [LARGE SCALE GENOMIC DNA]</scope>
    <source>
        <strain>cv. Nipponbare</strain>
    </source>
</reference>
<reference key="4">
    <citation type="journal article" date="2008" name="Nucleic Acids Res.">
        <title>The rice annotation project database (RAP-DB): 2008 update.</title>
        <authorList>
            <consortium name="The rice annotation project (RAP)"/>
        </authorList>
    </citation>
    <scope>GENOME REANNOTATION</scope>
    <source>
        <strain>cv. Nipponbare</strain>
    </source>
</reference>
<reference key="5">
    <citation type="journal article" date="2013" name="Rice">
        <title>Improvement of the Oryza sativa Nipponbare reference genome using next generation sequence and optical map data.</title>
        <authorList>
            <person name="Kawahara Y."/>
            <person name="de la Bastide M."/>
            <person name="Hamilton J.P."/>
            <person name="Kanamori H."/>
            <person name="McCombie W.R."/>
            <person name="Ouyang S."/>
            <person name="Schwartz D.C."/>
            <person name="Tanaka T."/>
            <person name="Wu J."/>
            <person name="Zhou S."/>
            <person name="Childs K.L."/>
            <person name="Davidson R.M."/>
            <person name="Lin H."/>
            <person name="Quesada-Ocampo L."/>
            <person name="Vaillancourt B."/>
            <person name="Sakai H."/>
            <person name="Lee S.S."/>
            <person name="Kim J."/>
            <person name="Numa H."/>
            <person name="Itoh T."/>
            <person name="Buell C.R."/>
            <person name="Matsumoto T."/>
        </authorList>
    </citation>
    <scope>GENOME REANNOTATION</scope>
    <source>
        <strain>cv. Nipponbare</strain>
    </source>
</reference>
<reference key="6">
    <citation type="journal article" date="2003" name="Science">
        <title>Collection, mapping, and annotation of over 28,000 cDNA clones from japonica rice.</title>
        <authorList>
            <consortium name="The rice full-length cDNA consortium"/>
        </authorList>
    </citation>
    <scope>NUCLEOTIDE SEQUENCE [LARGE SCALE MRNA] (ISOFORMS 1 AND 2)</scope>
    <source>
        <strain>cv. Nipponbare</strain>
    </source>
</reference>
<reference key="7">
    <citation type="journal article" date="2008" name="BMC Genomics">
        <title>Genome-wide analysis of CCCH zinc finger family in Arabidopsis and rice.</title>
        <authorList>
            <person name="Wang D."/>
            <person name="Guo Y."/>
            <person name="Wu C."/>
            <person name="Yang G."/>
            <person name="Li Y."/>
            <person name="Zheng C."/>
        </authorList>
    </citation>
    <scope>NOMENCLATURE</scope>
</reference>
<evidence type="ECO:0000250" key="1"/>
<evidence type="ECO:0000255" key="2">
    <source>
        <dbReference type="PROSITE-ProRule" id="PRU00723"/>
    </source>
</evidence>
<evidence type="ECO:0000256" key="3">
    <source>
        <dbReference type="SAM" id="MobiDB-lite"/>
    </source>
</evidence>
<evidence type="ECO:0000303" key="4">
    <source>
    </source>
</evidence>
<evidence type="ECO:0000303" key="5">
    <source ref="1"/>
</evidence>
<evidence type="ECO:0000305" key="6"/>
<comment type="subcellular location">
    <subcellularLocation>
        <location evidence="1">Nucleus</location>
    </subcellularLocation>
</comment>
<comment type="alternative products">
    <event type="alternative splicing"/>
    <isoform>
        <id>Q5NAW2-1</id>
        <name>1</name>
        <sequence type="displayed"/>
    </isoform>
    <isoform>
        <id>Q5NAW2-2</id>
        <name>2</name>
        <sequence type="described" ref="VSP_013559"/>
    </isoform>
    <isoform>
        <id>Q5NAW2-3</id>
        <name>3</name>
        <sequence type="described" ref="VSP_013560"/>
    </isoform>
</comment>
<comment type="miscellaneous">
    <molecule>Isoform 2</molecule>
    <text evidence="6">May be due to intron retention.</text>
</comment>
<comment type="miscellaneous">
    <molecule>Isoform 3</molecule>
    <text evidence="6">May be due to intron retention.</text>
</comment>
<protein>
    <recommendedName>
        <fullName>Zinc finger CCCH domain-containing protein 6</fullName>
        <shortName>OsC3H6</shortName>
    </recommendedName>
    <alternativeName>
        <fullName>Zinc finger CCCH domain-containing protein ZFN-like 1</fullName>
    </alternativeName>
</protein>
<gene>
    <name type="ordered locus">Os01g0258700</name>
    <name type="ordered locus">LOC_Os01g15460</name>
    <name type="ORF">P0462H08.27-1</name>
    <name type="ORF">P0462H08.27-2</name>
</gene>
<accession>Q5NAW2</accession>
<accession>A0A0P0V0L0</accession>
<accession>Q0JNX7</accession>
<accession>Q5NAW3</accession>
<accession>Q6IVC4</accession>
<organism>
    <name type="scientific">Oryza sativa subsp. japonica</name>
    <name type="common">Rice</name>
    <dbReference type="NCBI Taxonomy" id="39947"/>
    <lineage>
        <taxon>Eukaryota</taxon>
        <taxon>Viridiplantae</taxon>
        <taxon>Streptophyta</taxon>
        <taxon>Embryophyta</taxon>
        <taxon>Tracheophyta</taxon>
        <taxon>Spermatophyta</taxon>
        <taxon>Magnoliopsida</taxon>
        <taxon>Liliopsida</taxon>
        <taxon>Poales</taxon>
        <taxon>Poaceae</taxon>
        <taxon>BOP clade</taxon>
        <taxon>Oryzoideae</taxon>
        <taxon>Oryzeae</taxon>
        <taxon>Oryzinae</taxon>
        <taxon>Oryza</taxon>
        <taxon>Oryza sativa</taxon>
    </lineage>
</organism>
<sequence>MEQPHAAAAAAGGGEGEGGASPDTGLEGPMWRMGLGGGGGGGGGGGGGDGDAAGRLPERPGEEDCVYYLRTGACGFGDRCRYNHPRDRGGTEFGGGARNAAALDYPERAGQPICEYYMKTGTCKFGTNCKYHHPKQDGAVLPVMLNNSGFPIRLGEKECSYYMKTGQCKFGTTCKFHHPEFGGVPMTPGIYPPLQSPSIASPHPYASLANWQMGRPPVVPGSYIPGSYTPMMLSSGMIPLQGWSPYPASVNPVVSGGAQQNVQAGPVYGMGHHGSSSTIAYGGPYVPYASSTGQSSNNQQEHGFPERPGQPDCQYYMRTGDCKFGATCKYHHPRELSAPKSGYMVNSLCLPLRPGAQPCAYYAQNGYCRYGVACKYDHPMGTLGYSPSALPLSDMPIAPYPIGFSIATLAPSSPSPDLRPEYISTKDQSVNQVTSPVAASEPVGSILPKGVFPADTMMRAQTNTTSGGSSSPGGGR</sequence>
<name>C3H6_ORYSJ</name>
<feature type="chain" id="PRO_0000213922" description="Zinc finger CCCH domain-containing protein 6">
    <location>
        <begin position="1"/>
        <end position="476"/>
    </location>
</feature>
<feature type="zinc finger region" description="C3H1-type 1" evidence="2">
    <location>
        <begin position="59"/>
        <end position="87"/>
    </location>
</feature>
<feature type="zinc finger region" description="C3H1-type 2" evidence="2">
    <location>
        <begin position="108"/>
        <end position="136"/>
    </location>
</feature>
<feature type="zinc finger region" description="C3H1-type 3" evidence="2">
    <location>
        <begin position="153"/>
        <end position="181"/>
    </location>
</feature>
<feature type="zinc finger region" description="C3H1-type 4" evidence="2">
    <location>
        <begin position="307"/>
        <end position="335"/>
    </location>
</feature>
<feature type="zinc finger region" description="C3H1-type 5" evidence="2">
    <location>
        <begin position="353"/>
        <end position="381"/>
    </location>
</feature>
<feature type="region of interest" description="Disordered" evidence="3">
    <location>
        <begin position="1"/>
        <end position="57"/>
    </location>
</feature>
<feature type="region of interest" description="Disordered" evidence="3">
    <location>
        <begin position="290"/>
        <end position="309"/>
    </location>
</feature>
<feature type="region of interest" description="Disordered" evidence="3">
    <location>
        <begin position="456"/>
        <end position="476"/>
    </location>
</feature>
<feature type="compositionally biased region" description="Low complexity" evidence="3">
    <location>
        <begin position="1"/>
        <end position="10"/>
    </location>
</feature>
<feature type="compositionally biased region" description="Gly residues" evidence="3">
    <location>
        <begin position="34"/>
        <end position="51"/>
    </location>
</feature>
<feature type="compositionally biased region" description="Polar residues" evidence="3">
    <location>
        <begin position="290"/>
        <end position="301"/>
    </location>
</feature>
<feature type="splice variant" id="VSP_013560" description="In isoform 3." evidence="5">
    <location>
        <begin position="1"/>
        <end position="269"/>
    </location>
</feature>
<feature type="splice variant" id="VSP_013559" description="In isoform 2." evidence="4">
    <location>
        <begin position="1"/>
        <end position="29"/>
    </location>
</feature>
<feature type="sequence conflict" description="In Ref. 6; AK111903." evidence="6" ref="6">
    <original>E</original>
    <variation>K</variation>
    <location>
        <position position="158"/>
    </location>
</feature>
<feature type="sequence conflict" description="In Ref. 6; AK111727." evidence="6" ref="6">
    <original>S</original>
    <variation>G</variation>
    <location>
        <position position="386"/>
    </location>
</feature>
<dbReference type="EMBL" id="AY573063">
    <property type="protein sequence ID" value="AAT35591.1"/>
    <property type="molecule type" value="mRNA"/>
</dbReference>
<dbReference type="EMBL" id="AY620413">
    <property type="protein sequence ID" value="AAT28673.1"/>
    <property type="molecule type" value="mRNA"/>
</dbReference>
<dbReference type="EMBL" id="AP002525">
    <property type="protein sequence ID" value="BAD81401.1"/>
    <property type="molecule type" value="Genomic_DNA"/>
</dbReference>
<dbReference type="EMBL" id="AP002525">
    <property type="protein sequence ID" value="BAD81402.1"/>
    <property type="molecule type" value="Genomic_DNA"/>
</dbReference>
<dbReference type="EMBL" id="AP008207">
    <property type="protein sequence ID" value="BAF04551.1"/>
    <property type="molecule type" value="Genomic_DNA"/>
</dbReference>
<dbReference type="EMBL" id="AP014957">
    <property type="protein sequence ID" value="BAS71408.1"/>
    <property type="molecule type" value="Genomic_DNA"/>
</dbReference>
<dbReference type="EMBL" id="AK111633">
    <property type="status" value="NOT_ANNOTATED_CDS"/>
    <property type="molecule type" value="mRNA"/>
</dbReference>
<dbReference type="EMBL" id="AK111727">
    <property type="status" value="NOT_ANNOTATED_CDS"/>
    <property type="molecule type" value="mRNA"/>
</dbReference>
<dbReference type="EMBL" id="AK111903">
    <property type="status" value="NOT_ANNOTATED_CDS"/>
    <property type="molecule type" value="mRNA"/>
</dbReference>
<dbReference type="RefSeq" id="XP_015651248.1">
    <property type="nucleotide sequence ID" value="XM_015795762.1"/>
</dbReference>
<dbReference type="FunCoup" id="Q5NAW2">
    <property type="interactions" value="1500"/>
</dbReference>
<dbReference type="STRING" id="39947.Q5NAW2"/>
<dbReference type="PaxDb" id="39947-Q5NAW2"/>
<dbReference type="EnsemblPlants" id="Os01t0258700-01">
    <molecule id="Q5NAW2-1"/>
    <property type="protein sequence ID" value="Os01t0258700-01"/>
    <property type="gene ID" value="Os01g0258700"/>
</dbReference>
<dbReference type="Gramene" id="Os01t0258700-01">
    <molecule id="Q5NAW2-1"/>
    <property type="protein sequence ID" value="Os01t0258700-01"/>
    <property type="gene ID" value="Os01g0258700"/>
</dbReference>
<dbReference type="KEGG" id="dosa:Os01g0258700"/>
<dbReference type="eggNOG" id="KOG1677">
    <property type="taxonomic scope" value="Eukaryota"/>
</dbReference>
<dbReference type="HOGENOM" id="CLU_033292_1_1_1"/>
<dbReference type="InParanoid" id="Q5NAW2"/>
<dbReference type="OMA" id="AYTGPYL"/>
<dbReference type="OrthoDB" id="411372at2759"/>
<dbReference type="Proteomes" id="UP000000763">
    <property type="component" value="Chromosome 1"/>
</dbReference>
<dbReference type="Proteomes" id="UP000059680">
    <property type="component" value="Chromosome 1"/>
</dbReference>
<dbReference type="ExpressionAtlas" id="Q5NAW2">
    <property type="expression patterns" value="baseline and differential"/>
</dbReference>
<dbReference type="GO" id="GO:0005634">
    <property type="term" value="C:nucleus"/>
    <property type="evidence" value="ECO:0007669"/>
    <property type="project" value="UniProtKB-SubCell"/>
</dbReference>
<dbReference type="GO" id="GO:0003677">
    <property type="term" value="F:DNA binding"/>
    <property type="evidence" value="ECO:0007669"/>
    <property type="project" value="UniProtKB-KW"/>
</dbReference>
<dbReference type="GO" id="GO:0003729">
    <property type="term" value="F:mRNA binding"/>
    <property type="evidence" value="ECO:0000318"/>
    <property type="project" value="GO_Central"/>
</dbReference>
<dbReference type="GO" id="GO:0008270">
    <property type="term" value="F:zinc ion binding"/>
    <property type="evidence" value="ECO:0007669"/>
    <property type="project" value="UniProtKB-KW"/>
</dbReference>
<dbReference type="Gene3D" id="2.30.30.1190">
    <property type="match status" value="1"/>
</dbReference>
<dbReference type="Gene3D" id="4.10.1000.10">
    <property type="entry name" value="Zinc finger, CCCH-type"/>
    <property type="match status" value="2"/>
</dbReference>
<dbReference type="InterPro" id="IPR050974">
    <property type="entry name" value="Plant_ZF_CCCH"/>
</dbReference>
<dbReference type="InterPro" id="IPR000571">
    <property type="entry name" value="Znf_CCCH"/>
</dbReference>
<dbReference type="InterPro" id="IPR036855">
    <property type="entry name" value="Znf_CCCH_sf"/>
</dbReference>
<dbReference type="PANTHER" id="PTHR12506">
    <property type="entry name" value="PROTEIN PHOSPHATASE RELATED"/>
    <property type="match status" value="1"/>
</dbReference>
<dbReference type="PANTHER" id="PTHR12506:SF80">
    <property type="entry name" value="ZINC FINGER CCCH DOMAIN-CONTAINING PROTEIN 6"/>
    <property type="match status" value="1"/>
</dbReference>
<dbReference type="Pfam" id="PF00642">
    <property type="entry name" value="zf-CCCH"/>
    <property type="match status" value="5"/>
</dbReference>
<dbReference type="SMART" id="SM00356">
    <property type="entry name" value="ZnF_C3H1"/>
    <property type="match status" value="5"/>
</dbReference>
<dbReference type="SUPFAM" id="SSF90229">
    <property type="entry name" value="CCCH zinc finger"/>
    <property type="match status" value="5"/>
</dbReference>
<dbReference type="PROSITE" id="PS50103">
    <property type="entry name" value="ZF_C3H1"/>
    <property type="match status" value="5"/>
</dbReference>
<proteinExistence type="evidence at transcript level"/>
<keyword id="KW-0025">Alternative splicing</keyword>
<keyword id="KW-0238">DNA-binding</keyword>
<keyword id="KW-0479">Metal-binding</keyword>
<keyword id="KW-0539">Nucleus</keyword>
<keyword id="KW-1185">Reference proteome</keyword>
<keyword id="KW-0677">Repeat</keyword>
<keyword id="KW-0862">Zinc</keyword>
<keyword id="KW-0863">Zinc-finger</keyword>